<gene>
    <name evidence="1" type="primary">hslV</name>
    <name type="ordered locus">ECDH10B_4121</name>
</gene>
<keyword id="KW-0021">Allosteric enzyme</keyword>
<keyword id="KW-0963">Cytoplasm</keyword>
<keyword id="KW-0378">Hydrolase</keyword>
<keyword id="KW-0479">Metal-binding</keyword>
<keyword id="KW-0645">Protease</keyword>
<keyword id="KW-0915">Sodium</keyword>
<keyword id="KW-0346">Stress response</keyword>
<keyword id="KW-0888">Threonine protease</keyword>
<reference key="1">
    <citation type="journal article" date="2008" name="J. Bacteriol.">
        <title>The complete genome sequence of Escherichia coli DH10B: insights into the biology of a laboratory workhorse.</title>
        <authorList>
            <person name="Durfee T."/>
            <person name="Nelson R."/>
            <person name="Baldwin S."/>
            <person name="Plunkett G. III"/>
            <person name="Burland V."/>
            <person name="Mau B."/>
            <person name="Petrosino J.F."/>
            <person name="Qin X."/>
            <person name="Muzny D.M."/>
            <person name="Ayele M."/>
            <person name="Gibbs R.A."/>
            <person name="Csorgo B."/>
            <person name="Posfai G."/>
            <person name="Weinstock G.M."/>
            <person name="Blattner F.R."/>
        </authorList>
    </citation>
    <scope>NUCLEOTIDE SEQUENCE [LARGE SCALE GENOMIC DNA]</scope>
    <source>
        <strain>K12 / DH10B</strain>
    </source>
</reference>
<dbReference type="EC" id="3.4.25.2" evidence="1"/>
<dbReference type="EMBL" id="CP000948">
    <property type="protein sequence ID" value="ACB04944.1"/>
    <property type="molecule type" value="Genomic_DNA"/>
</dbReference>
<dbReference type="RefSeq" id="WP_000208242.1">
    <property type="nucleotide sequence ID" value="NC_010473.1"/>
</dbReference>
<dbReference type="SMR" id="B1XB98"/>
<dbReference type="MEROPS" id="T01.006"/>
<dbReference type="GeneID" id="93777966"/>
<dbReference type="KEGG" id="ecd:ECDH10B_4121"/>
<dbReference type="HOGENOM" id="CLU_093872_1_0_6"/>
<dbReference type="GO" id="GO:0009376">
    <property type="term" value="C:HslUV protease complex"/>
    <property type="evidence" value="ECO:0007669"/>
    <property type="project" value="UniProtKB-UniRule"/>
</dbReference>
<dbReference type="GO" id="GO:0005839">
    <property type="term" value="C:proteasome core complex"/>
    <property type="evidence" value="ECO:0007669"/>
    <property type="project" value="InterPro"/>
</dbReference>
<dbReference type="GO" id="GO:0046872">
    <property type="term" value="F:metal ion binding"/>
    <property type="evidence" value="ECO:0007669"/>
    <property type="project" value="UniProtKB-KW"/>
</dbReference>
<dbReference type="GO" id="GO:0004298">
    <property type="term" value="F:threonine-type endopeptidase activity"/>
    <property type="evidence" value="ECO:0007669"/>
    <property type="project" value="UniProtKB-KW"/>
</dbReference>
<dbReference type="GO" id="GO:0051603">
    <property type="term" value="P:proteolysis involved in protein catabolic process"/>
    <property type="evidence" value="ECO:0007669"/>
    <property type="project" value="InterPro"/>
</dbReference>
<dbReference type="CDD" id="cd01913">
    <property type="entry name" value="protease_HslV"/>
    <property type="match status" value="1"/>
</dbReference>
<dbReference type="FunFam" id="3.60.20.10:FF:000002">
    <property type="entry name" value="ATP-dependent protease subunit HslV"/>
    <property type="match status" value="1"/>
</dbReference>
<dbReference type="Gene3D" id="3.60.20.10">
    <property type="entry name" value="Glutamine Phosphoribosylpyrophosphate, subunit 1, domain 1"/>
    <property type="match status" value="1"/>
</dbReference>
<dbReference type="HAMAP" id="MF_00248">
    <property type="entry name" value="HslV"/>
    <property type="match status" value="1"/>
</dbReference>
<dbReference type="InterPro" id="IPR022281">
    <property type="entry name" value="ATP-dep_Prtase_HsIV_su"/>
</dbReference>
<dbReference type="InterPro" id="IPR029055">
    <property type="entry name" value="Ntn_hydrolases_N"/>
</dbReference>
<dbReference type="InterPro" id="IPR001353">
    <property type="entry name" value="Proteasome_sua/b"/>
</dbReference>
<dbReference type="InterPro" id="IPR023333">
    <property type="entry name" value="Proteasome_suB-type"/>
</dbReference>
<dbReference type="NCBIfam" id="TIGR03692">
    <property type="entry name" value="ATP_dep_HslV"/>
    <property type="match status" value="1"/>
</dbReference>
<dbReference type="NCBIfam" id="NF003964">
    <property type="entry name" value="PRK05456.1"/>
    <property type="match status" value="1"/>
</dbReference>
<dbReference type="PANTHER" id="PTHR32194:SF0">
    <property type="entry name" value="ATP-DEPENDENT PROTEASE SUBUNIT HSLV"/>
    <property type="match status" value="1"/>
</dbReference>
<dbReference type="PANTHER" id="PTHR32194">
    <property type="entry name" value="METALLOPROTEASE TLDD"/>
    <property type="match status" value="1"/>
</dbReference>
<dbReference type="Pfam" id="PF00227">
    <property type="entry name" value="Proteasome"/>
    <property type="match status" value="1"/>
</dbReference>
<dbReference type="PIRSF" id="PIRSF039093">
    <property type="entry name" value="HslV"/>
    <property type="match status" value="1"/>
</dbReference>
<dbReference type="SUPFAM" id="SSF56235">
    <property type="entry name" value="N-terminal nucleophile aminohydrolases (Ntn hydrolases)"/>
    <property type="match status" value="1"/>
</dbReference>
<dbReference type="PROSITE" id="PS51476">
    <property type="entry name" value="PROTEASOME_BETA_2"/>
    <property type="match status" value="1"/>
</dbReference>
<protein>
    <recommendedName>
        <fullName evidence="1">ATP-dependent protease subunit HslV</fullName>
        <ecNumber evidence="1">3.4.25.2</ecNumber>
    </recommendedName>
    <alternativeName>
        <fullName evidence="1">Heat shock protein HslV</fullName>
    </alternativeName>
</protein>
<proteinExistence type="inferred from homology"/>
<evidence type="ECO:0000255" key="1">
    <source>
        <dbReference type="HAMAP-Rule" id="MF_00248"/>
    </source>
</evidence>
<organism>
    <name type="scientific">Escherichia coli (strain K12 / DH10B)</name>
    <dbReference type="NCBI Taxonomy" id="316385"/>
    <lineage>
        <taxon>Bacteria</taxon>
        <taxon>Pseudomonadati</taxon>
        <taxon>Pseudomonadota</taxon>
        <taxon>Gammaproteobacteria</taxon>
        <taxon>Enterobacterales</taxon>
        <taxon>Enterobacteriaceae</taxon>
        <taxon>Escherichia</taxon>
    </lineage>
</organism>
<sequence>MTTIVSVRRNGHVVIAGDGQATLGNTVMKGNVKKVRRLYNDKVIAGFAGGTADAFTLFELFERKLEMHQGHLVKAAVELAKDWRTDRMLRKLEALLAVADETASLIITGNGDVVQPENDLIAIGSGGPYAQAAARALLENTELSAREIAEKALDIAGDICIYTNHFHTIEELSYKA</sequence>
<accession>B1XB98</accession>
<comment type="function">
    <text evidence="1">Protease subunit of a proteasome-like degradation complex believed to be a general protein degrading machinery.</text>
</comment>
<comment type="catalytic activity">
    <reaction evidence="1">
        <text>ATP-dependent cleavage of peptide bonds with broad specificity.</text>
        <dbReference type="EC" id="3.4.25.2"/>
    </reaction>
</comment>
<comment type="activity regulation">
    <text evidence="1">Allosterically activated by HslU binding.</text>
</comment>
<comment type="subunit">
    <text evidence="1">A double ring-shaped homohexamer of HslV is capped on each side by a ring-shaped HslU homohexamer. The assembly of the HslU/HslV complex is dependent on binding of ATP.</text>
</comment>
<comment type="subcellular location">
    <subcellularLocation>
        <location evidence="1">Cytoplasm</location>
    </subcellularLocation>
</comment>
<comment type="induction">
    <text evidence="1">By heat shock.</text>
</comment>
<comment type="similarity">
    <text evidence="1">Belongs to the peptidase T1B family. HslV subfamily.</text>
</comment>
<name>HSLV_ECODH</name>
<feature type="chain" id="PRO_1000100891" description="ATP-dependent protease subunit HslV">
    <location>
        <begin position="1"/>
        <end position="176"/>
    </location>
</feature>
<feature type="active site" evidence="1">
    <location>
        <position position="2"/>
    </location>
</feature>
<feature type="binding site" evidence="1">
    <location>
        <position position="157"/>
    </location>
    <ligand>
        <name>Na(+)</name>
        <dbReference type="ChEBI" id="CHEBI:29101"/>
    </ligand>
</feature>
<feature type="binding site" evidence="1">
    <location>
        <position position="160"/>
    </location>
    <ligand>
        <name>Na(+)</name>
        <dbReference type="ChEBI" id="CHEBI:29101"/>
    </ligand>
</feature>
<feature type="binding site" evidence="1">
    <location>
        <position position="163"/>
    </location>
    <ligand>
        <name>Na(+)</name>
        <dbReference type="ChEBI" id="CHEBI:29101"/>
    </ligand>
</feature>